<proteinExistence type="inferred from homology"/>
<name>NU4LC_DIOEL</name>
<comment type="function">
    <text evidence="1">NDH shuttles electrons from NAD(P)H:plastoquinone, via FMN and iron-sulfur (Fe-S) centers, to quinones in the photosynthetic chain and possibly in a chloroplast respiratory chain. The immediate electron acceptor for the enzyme in this species is believed to be plastoquinone. Couples the redox reaction to proton translocation, and thus conserves the redox energy in a proton gradient.</text>
</comment>
<comment type="catalytic activity">
    <reaction evidence="1">
        <text>a plastoquinone + NADH + (n+1) H(+)(in) = a plastoquinol + NAD(+) + n H(+)(out)</text>
        <dbReference type="Rhea" id="RHEA:42608"/>
        <dbReference type="Rhea" id="RHEA-COMP:9561"/>
        <dbReference type="Rhea" id="RHEA-COMP:9562"/>
        <dbReference type="ChEBI" id="CHEBI:15378"/>
        <dbReference type="ChEBI" id="CHEBI:17757"/>
        <dbReference type="ChEBI" id="CHEBI:57540"/>
        <dbReference type="ChEBI" id="CHEBI:57945"/>
        <dbReference type="ChEBI" id="CHEBI:62192"/>
    </reaction>
</comment>
<comment type="catalytic activity">
    <reaction evidence="1">
        <text>a plastoquinone + NADPH + (n+1) H(+)(in) = a plastoquinol + NADP(+) + n H(+)(out)</text>
        <dbReference type="Rhea" id="RHEA:42612"/>
        <dbReference type="Rhea" id="RHEA-COMP:9561"/>
        <dbReference type="Rhea" id="RHEA-COMP:9562"/>
        <dbReference type="ChEBI" id="CHEBI:15378"/>
        <dbReference type="ChEBI" id="CHEBI:17757"/>
        <dbReference type="ChEBI" id="CHEBI:57783"/>
        <dbReference type="ChEBI" id="CHEBI:58349"/>
        <dbReference type="ChEBI" id="CHEBI:62192"/>
    </reaction>
</comment>
<comment type="subunit">
    <text evidence="1">NDH is composed of at least 16 different subunits, 5 of which are encoded in the nucleus.</text>
</comment>
<comment type="subcellular location">
    <subcellularLocation>
        <location evidence="1">Plastid</location>
        <location evidence="1">Chloroplast thylakoid membrane</location>
        <topology evidence="1">Multi-pass membrane protein</topology>
    </subcellularLocation>
</comment>
<comment type="similarity">
    <text evidence="1">Belongs to the complex I subunit 4L family.</text>
</comment>
<dbReference type="EC" id="7.1.1.-" evidence="1"/>
<dbReference type="EMBL" id="EF380353">
    <property type="protein sequence ID" value="ABR01483.1"/>
    <property type="molecule type" value="Genomic_DNA"/>
</dbReference>
<dbReference type="RefSeq" id="YP_001294406.1">
    <property type="nucleotide sequence ID" value="NC_009601.1"/>
</dbReference>
<dbReference type="SMR" id="A6MMR1"/>
<dbReference type="GeneID" id="5236640"/>
<dbReference type="GO" id="GO:0009535">
    <property type="term" value="C:chloroplast thylakoid membrane"/>
    <property type="evidence" value="ECO:0007669"/>
    <property type="project" value="UniProtKB-SubCell"/>
</dbReference>
<dbReference type="GO" id="GO:0030964">
    <property type="term" value="C:NADH dehydrogenase complex"/>
    <property type="evidence" value="ECO:0007669"/>
    <property type="project" value="TreeGrafter"/>
</dbReference>
<dbReference type="GO" id="GO:0016655">
    <property type="term" value="F:oxidoreductase activity, acting on NAD(P)H, quinone or similar compound as acceptor"/>
    <property type="evidence" value="ECO:0007669"/>
    <property type="project" value="UniProtKB-UniRule"/>
</dbReference>
<dbReference type="GO" id="GO:0048038">
    <property type="term" value="F:quinone binding"/>
    <property type="evidence" value="ECO:0007669"/>
    <property type="project" value="UniProtKB-KW"/>
</dbReference>
<dbReference type="GO" id="GO:0042773">
    <property type="term" value="P:ATP synthesis coupled electron transport"/>
    <property type="evidence" value="ECO:0007669"/>
    <property type="project" value="InterPro"/>
</dbReference>
<dbReference type="GO" id="GO:0019684">
    <property type="term" value="P:photosynthesis, light reaction"/>
    <property type="evidence" value="ECO:0007669"/>
    <property type="project" value="UniProtKB-UniRule"/>
</dbReference>
<dbReference type="FunFam" id="1.10.287.3510:FF:000001">
    <property type="entry name" value="NADH-quinone oxidoreductase subunit K"/>
    <property type="match status" value="1"/>
</dbReference>
<dbReference type="Gene3D" id="1.10.287.3510">
    <property type="match status" value="1"/>
</dbReference>
<dbReference type="HAMAP" id="MF_01456">
    <property type="entry name" value="NDH1_NuoK"/>
    <property type="match status" value="1"/>
</dbReference>
<dbReference type="InterPro" id="IPR001133">
    <property type="entry name" value="NADH_UbQ_OxRdtase_chain4L/K"/>
</dbReference>
<dbReference type="InterPro" id="IPR039428">
    <property type="entry name" value="NUOK/Mnh_C1-like"/>
</dbReference>
<dbReference type="NCBIfam" id="NF004320">
    <property type="entry name" value="PRK05715.1-2"/>
    <property type="match status" value="1"/>
</dbReference>
<dbReference type="NCBIfam" id="NF004322">
    <property type="entry name" value="PRK05715.1-4"/>
    <property type="match status" value="1"/>
</dbReference>
<dbReference type="PANTHER" id="PTHR11434:SF16">
    <property type="entry name" value="NADH-UBIQUINONE OXIDOREDUCTASE CHAIN 4L"/>
    <property type="match status" value="1"/>
</dbReference>
<dbReference type="PANTHER" id="PTHR11434">
    <property type="entry name" value="NADH-UBIQUINONE OXIDOREDUCTASE SUBUNIT ND4L"/>
    <property type="match status" value="1"/>
</dbReference>
<dbReference type="Pfam" id="PF00420">
    <property type="entry name" value="Oxidored_q2"/>
    <property type="match status" value="1"/>
</dbReference>
<gene>
    <name evidence="1" type="primary">ndhE</name>
</gene>
<protein>
    <recommendedName>
        <fullName evidence="1">NAD(P)H-quinone oxidoreductase subunit 4L, chloroplastic</fullName>
        <ecNumber evidence="1">7.1.1.-</ecNumber>
    </recommendedName>
    <alternativeName>
        <fullName evidence="1">NAD(P)H dehydrogenase subunit 4L</fullName>
    </alternativeName>
    <alternativeName>
        <fullName evidence="1">NADH-plastoquinone oxidoreductase subunit 4L</fullName>
    </alternativeName>
</protein>
<accession>A6MMR1</accession>
<reference key="1">
    <citation type="journal article" date="2007" name="Mol. Phylogenet. Evol.">
        <title>Phylogenetic and evolutionary implications of complete chloroplast genome sequences of four early-diverging angiosperms: Buxus (Buxaceae), Chloranthus (Chloranthaceae), Dioscorea (Dioscoreaceae), and Illicium (Schisandraceae).</title>
        <authorList>
            <person name="Hansen D.R."/>
            <person name="Dastidar S.G."/>
            <person name="Cai Z."/>
            <person name="Penaflor C."/>
            <person name="Kuehl J.V."/>
            <person name="Boore J.L."/>
            <person name="Jansen R.K."/>
        </authorList>
    </citation>
    <scope>NUCLEOTIDE SEQUENCE [LARGE SCALE GENOMIC DNA]</scope>
</reference>
<organism>
    <name type="scientific">Dioscorea elephantipes</name>
    <name type="common">Elephant's foot yam</name>
    <name type="synonym">Testudinaria elephantipes</name>
    <dbReference type="NCBI Taxonomy" id="145284"/>
    <lineage>
        <taxon>Eukaryota</taxon>
        <taxon>Viridiplantae</taxon>
        <taxon>Streptophyta</taxon>
        <taxon>Embryophyta</taxon>
        <taxon>Tracheophyta</taxon>
        <taxon>Spermatophyta</taxon>
        <taxon>Magnoliopsida</taxon>
        <taxon>Liliopsida</taxon>
        <taxon>Dioscoreales</taxon>
        <taxon>Dioscoreaceae</taxon>
        <taxon>Dioscorea</taxon>
    </lineage>
</organism>
<feature type="chain" id="PRO_0000360325" description="NAD(P)H-quinone oxidoreductase subunit 4L, chloroplastic">
    <location>
        <begin position="1"/>
        <end position="101"/>
    </location>
</feature>
<feature type="transmembrane region" description="Helical" evidence="1">
    <location>
        <begin position="2"/>
        <end position="22"/>
    </location>
</feature>
<feature type="transmembrane region" description="Helical" evidence="1">
    <location>
        <begin position="61"/>
        <end position="81"/>
    </location>
</feature>
<evidence type="ECO:0000255" key="1">
    <source>
        <dbReference type="HAMAP-Rule" id="MF_01456"/>
    </source>
</evidence>
<geneLocation type="chloroplast"/>
<keyword id="KW-0150">Chloroplast</keyword>
<keyword id="KW-0472">Membrane</keyword>
<keyword id="KW-0520">NAD</keyword>
<keyword id="KW-0521">NADP</keyword>
<keyword id="KW-0934">Plastid</keyword>
<keyword id="KW-0618">Plastoquinone</keyword>
<keyword id="KW-0874">Quinone</keyword>
<keyword id="KW-0793">Thylakoid</keyword>
<keyword id="KW-1278">Translocase</keyword>
<keyword id="KW-0812">Transmembrane</keyword>
<keyword id="KW-1133">Transmembrane helix</keyword>
<keyword id="KW-0813">Transport</keyword>
<sequence length="101" mass="11261">MMFEHVLVLSVYLFSIGIYGLITSRNMVRALMCLDLILNSVNMNLVTFSDLFDSRQLKGDIFSIFVIAVAAAEAAIGLAIVSSIYRNRKSTRINQSNLLNN</sequence>